<organism>
    <name type="scientific">Gibberella moniliformis (strain M3125 / FGSC 7600)</name>
    <name type="common">Maize ear and stalk rot fungus</name>
    <name type="synonym">Fusarium verticillioides</name>
    <dbReference type="NCBI Taxonomy" id="334819"/>
    <lineage>
        <taxon>Eukaryota</taxon>
        <taxon>Fungi</taxon>
        <taxon>Dikarya</taxon>
        <taxon>Ascomycota</taxon>
        <taxon>Pezizomycotina</taxon>
        <taxon>Sordariomycetes</taxon>
        <taxon>Hypocreomycetidae</taxon>
        <taxon>Hypocreales</taxon>
        <taxon>Nectriaceae</taxon>
        <taxon>Fusarium</taxon>
        <taxon>Fusarium fujikuroi species complex</taxon>
    </lineage>
</organism>
<reference key="1">
    <citation type="journal article" date="2010" name="Nature">
        <title>Comparative genomics reveals mobile pathogenicity chromosomes in Fusarium.</title>
        <authorList>
            <person name="Ma L.-J."/>
            <person name="van der Does H.C."/>
            <person name="Borkovich K.A."/>
            <person name="Coleman J.J."/>
            <person name="Daboussi M.-J."/>
            <person name="Di Pietro A."/>
            <person name="Dufresne M."/>
            <person name="Freitag M."/>
            <person name="Grabherr M."/>
            <person name="Henrissat B."/>
            <person name="Houterman P.M."/>
            <person name="Kang S."/>
            <person name="Shim W.-B."/>
            <person name="Woloshuk C."/>
            <person name="Xie X."/>
            <person name="Xu J.-R."/>
            <person name="Antoniw J."/>
            <person name="Baker S.E."/>
            <person name="Bluhm B.H."/>
            <person name="Breakspear A."/>
            <person name="Brown D.W."/>
            <person name="Butchko R.A.E."/>
            <person name="Chapman S."/>
            <person name="Coulson R."/>
            <person name="Coutinho P.M."/>
            <person name="Danchin E.G.J."/>
            <person name="Diener A."/>
            <person name="Gale L.R."/>
            <person name="Gardiner D.M."/>
            <person name="Goff S."/>
            <person name="Hammond-Kosack K.E."/>
            <person name="Hilburn K."/>
            <person name="Hua-Van A."/>
            <person name="Jonkers W."/>
            <person name="Kazan K."/>
            <person name="Kodira C.D."/>
            <person name="Koehrsen M."/>
            <person name="Kumar L."/>
            <person name="Lee Y.-H."/>
            <person name="Li L."/>
            <person name="Manners J.M."/>
            <person name="Miranda-Saavedra D."/>
            <person name="Mukherjee M."/>
            <person name="Park G."/>
            <person name="Park J."/>
            <person name="Park S.-Y."/>
            <person name="Proctor R.H."/>
            <person name="Regev A."/>
            <person name="Ruiz-Roldan M.C."/>
            <person name="Sain D."/>
            <person name="Sakthikumar S."/>
            <person name="Sykes S."/>
            <person name="Schwartz D.C."/>
            <person name="Turgeon B.G."/>
            <person name="Wapinski I."/>
            <person name="Yoder O."/>
            <person name="Young S."/>
            <person name="Zeng Q."/>
            <person name="Zhou S."/>
            <person name="Galagan J."/>
            <person name="Cuomo C.A."/>
            <person name="Kistler H.C."/>
            <person name="Rep M."/>
        </authorList>
    </citation>
    <scope>NUCLEOTIDE SEQUENCE [LARGE SCALE GENOMIC DNA]</scope>
    <source>
        <strain>M3125 / FGSC 7600</strain>
    </source>
</reference>
<reference key="2">
    <citation type="journal article" date="2012" name="Fungal Genet. Biol.">
        <title>Identification of gene clusters associated with fusaric acid, fusarin, and perithecial pigment production in Fusarium verticillioides.</title>
        <authorList>
            <person name="Brown D.W."/>
            <person name="Butchko R.A."/>
            <person name="Busman M."/>
            <person name="Proctor R.H."/>
        </authorList>
    </citation>
    <scope>FUNCTION</scope>
</reference>
<proteinExistence type="inferred from homology"/>
<feature type="chain" id="PRO_0000437366" description="Putative aldehyde dehydrogenase FUS7">
    <location>
        <begin position="1"/>
        <end position="461"/>
    </location>
</feature>
<feature type="active site" evidence="3">
    <location>
        <position position="242"/>
    </location>
</feature>
<feature type="active site" evidence="3">
    <location>
        <position position="276"/>
    </location>
</feature>
<feature type="binding site" evidence="1">
    <location>
        <begin position="220"/>
        <end position="225"/>
    </location>
    <ligand>
        <name>NAD(+)</name>
        <dbReference type="ChEBI" id="CHEBI:57540"/>
    </ligand>
</feature>
<dbReference type="EC" id="1.2.1.3" evidence="1"/>
<dbReference type="EMBL" id="CM000586">
    <property type="protein sequence ID" value="EWG52299.1"/>
    <property type="molecule type" value="Genomic_DNA"/>
</dbReference>
<dbReference type="EMBL" id="CM000586">
    <property type="protein sequence ID" value="EWG52300.1"/>
    <property type="status" value="ALT_SEQ"/>
    <property type="molecule type" value="Genomic_DNA"/>
</dbReference>
<dbReference type="EMBL" id="CM000586">
    <property type="protein sequence ID" value="EWG52301.1"/>
    <property type="status" value="ALT_SEQ"/>
    <property type="molecule type" value="Genomic_DNA"/>
</dbReference>
<dbReference type="RefSeq" id="XP_018758490.1">
    <property type="nucleotide sequence ID" value="XM_018900240.1"/>
</dbReference>
<dbReference type="RefSeq" id="XP_018758491.1">
    <property type="nucleotide sequence ID" value="XM_018900241.1"/>
</dbReference>
<dbReference type="RefSeq" id="XP_018758492.1">
    <property type="nucleotide sequence ID" value="XM_018900242.1"/>
</dbReference>
<dbReference type="SMR" id="W7MWX4"/>
<dbReference type="STRING" id="334819.W7MWX4"/>
<dbReference type="EnsemblFungi" id="FVEG_11080T0">
    <property type="protein sequence ID" value="FVEG_11080T0"/>
    <property type="gene ID" value="FVEG_11080"/>
</dbReference>
<dbReference type="GeneID" id="30068616"/>
<dbReference type="KEGG" id="fvr:FVEG_11080"/>
<dbReference type="VEuPathDB" id="FungiDB:FVEG_11080"/>
<dbReference type="eggNOG" id="KOG2450">
    <property type="taxonomic scope" value="Eukaryota"/>
</dbReference>
<dbReference type="HOGENOM" id="CLU_005391_0_0_1"/>
<dbReference type="OMA" id="LWTDEVF"/>
<dbReference type="OrthoDB" id="15290at110618"/>
<dbReference type="Proteomes" id="UP000009096">
    <property type="component" value="Chromosome 9"/>
</dbReference>
<dbReference type="GO" id="GO:0004029">
    <property type="term" value="F:aldehyde dehydrogenase (NAD+) activity"/>
    <property type="evidence" value="ECO:0007669"/>
    <property type="project" value="UniProtKB-EC"/>
</dbReference>
<dbReference type="CDD" id="cd07106">
    <property type="entry name" value="ALDH_AldA-AAD23400"/>
    <property type="match status" value="1"/>
</dbReference>
<dbReference type="FunFam" id="3.40.605.10:FF:000007">
    <property type="entry name" value="NAD/NADP-dependent betaine aldehyde dehydrogenase"/>
    <property type="match status" value="1"/>
</dbReference>
<dbReference type="Gene3D" id="3.40.605.10">
    <property type="entry name" value="Aldehyde Dehydrogenase, Chain A, domain 1"/>
    <property type="match status" value="1"/>
</dbReference>
<dbReference type="Gene3D" id="3.40.309.10">
    <property type="entry name" value="Aldehyde Dehydrogenase, Chain A, domain 2"/>
    <property type="match status" value="1"/>
</dbReference>
<dbReference type="InterPro" id="IPR016161">
    <property type="entry name" value="Ald_DH/histidinol_DH"/>
</dbReference>
<dbReference type="InterPro" id="IPR016163">
    <property type="entry name" value="Ald_DH_C"/>
</dbReference>
<dbReference type="InterPro" id="IPR016162">
    <property type="entry name" value="Ald_DH_N"/>
</dbReference>
<dbReference type="InterPro" id="IPR015590">
    <property type="entry name" value="Aldehyde_DH_dom"/>
</dbReference>
<dbReference type="InterPro" id="IPR044086">
    <property type="entry name" value="LUC3-like"/>
</dbReference>
<dbReference type="PANTHER" id="PTHR11699">
    <property type="entry name" value="ALDEHYDE DEHYDROGENASE-RELATED"/>
    <property type="match status" value="1"/>
</dbReference>
<dbReference type="Pfam" id="PF00171">
    <property type="entry name" value="Aldedh"/>
    <property type="match status" value="1"/>
</dbReference>
<dbReference type="SUPFAM" id="SSF53720">
    <property type="entry name" value="ALDH-like"/>
    <property type="match status" value="1"/>
</dbReference>
<keyword id="KW-0520">NAD</keyword>
<keyword id="KW-0560">Oxidoreductase</keyword>
<keyword id="KW-1185">Reference proteome</keyword>
<protein>
    <recommendedName>
        <fullName evidence="1">Putative aldehyde dehydrogenase FUS7</fullName>
        <ecNumber evidence="1">1.2.1.3</ecNumber>
    </recommendedName>
    <alternativeName>
        <fullName evidence="5">Fusarin biosynthesis protein 7</fullName>
    </alternativeName>
</protein>
<sequence length="461" mass="50109">MNFDTFHNIIAGQHRSARETSSGVNPLDRSSLWPAPVATANDVEEAVRSAQEAFPAWSQKTYKQRTELLEKFADLYLAHANEFCQLIATECGRTAGNAAIEVYFAAQWLRYPSKYEISQEITEDDKKTSIVTQEPLGVVAAICPWNFPLMLALGKIAPALATGNCVILKPSPFTPYSSLKLVELAQQVFPPSVLQVLHGHDDLGPMLVKHSRIQKITFTGSTATGKQILRDAAETMKRVTLETAGNNASIILPDVNIKAVIPQLAGGLWFNAGQVCIATRRMYIHQDIFEEVVAQLAEASKDLTSSIEPIQNEMQLVRLKQALADANAAGYELLSLGKTEAAEGFFIRPTIIKNPPPDAHAVQQENFGPIVSCIKFSSLDEAIFLANNSDTGLAASVWSGDISAAKRVAAKLEAGNVYINGPPQPDPYVPFGGQKQSGLGVEYGLPGLLSFCQTKSTYVYK</sequence>
<name>FUS7_GIBM7</name>
<gene>
    <name evidence="5" type="primary">FUS7</name>
    <name type="ORF">FVEG_11080</name>
</gene>
<evidence type="ECO:0000250" key="1">
    <source>
        <dbReference type="UniProtKB" id="O34660"/>
    </source>
</evidence>
<evidence type="ECO:0000250" key="2">
    <source>
        <dbReference type="UniProtKB" id="S0ENH1"/>
    </source>
</evidence>
<evidence type="ECO:0000255" key="3">
    <source>
        <dbReference type="PROSITE-ProRule" id="PRU10007"/>
    </source>
</evidence>
<evidence type="ECO:0000269" key="4">
    <source>
    </source>
</evidence>
<evidence type="ECO:0000303" key="5">
    <source>
    </source>
</evidence>
<evidence type="ECO:0000305" key="6"/>
<accession>W7MWX4</accession>
<accession>W7MMI5</accession>
<comment type="function">
    <text evidence="2 4">Putative aldehyde dehydrogenase; part of the gene cluster that mediates the biosynthesis of the mycotoxin fusarin C (PubMed:22652150). Within the cluster, FUS1, FUS2, FUS8 and FUS9 are sufficient for fusarin production (By similarity). The other FUS cluster members are not essential for fusarin C biosynthesis (By similarity).</text>
</comment>
<comment type="catalytic activity">
    <reaction evidence="1">
        <text>an aldehyde + NAD(+) + H2O = a carboxylate + NADH + 2 H(+)</text>
        <dbReference type="Rhea" id="RHEA:16185"/>
        <dbReference type="ChEBI" id="CHEBI:15377"/>
        <dbReference type="ChEBI" id="CHEBI:15378"/>
        <dbReference type="ChEBI" id="CHEBI:17478"/>
        <dbReference type="ChEBI" id="CHEBI:29067"/>
        <dbReference type="ChEBI" id="CHEBI:57540"/>
        <dbReference type="ChEBI" id="CHEBI:57945"/>
        <dbReference type="EC" id="1.2.1.3"/>
    </reaction>
</comment>
<comment type="similarity">
    <text evidence="6">Belongs to the aldehyde dehydrogenase family.</text>
</comment>
<comment type="sequence caution" evidence="6">
    <conflict type="erroneous gene model prediction">
        <sequence resource="EMBL-CDS" id="EWG52300"/>
    </conflict>
</comment>
<comment type="sequence caution" evidence="6">
    <conflict type="erroneous gene model prediction">
        <sequence resource="EMBL-CDS" id="EWG52301"/>
    </conflict>
</comment>